<evidence type="ECO:0000255" key="1">
    <source>
        <dbReference type="HAMAP-Rule" id="MF_01574"/>
    </source>
</evidence>
<protein>
    <recommendedName>
        <fullName evidence="1">6-phospho-beta-galactosidase</fullName>
        <ecNumber evidence="1">3.2.1.85</ecNumber>
    </recommendedName>
    <alternativeName>
        <fullName evidence="1">Beta-D-phosphogalactoside galactohydrolase</fullName>
        <shortName evidence="1">PGALase</shortName>
    </alternativeName>
    <alternativeName>
        <fullName evidence="1">P-beta-Gal</fullName>
        <shortName evidence="1">PBG</shortName>
    </alternativeName>
</protein>
<keyword id="KW-0326">Glycosidase</keyword>
<keyword id="KW-0378">Hydrolase</keyword>
<reference key="1">
    <citation type="submission" date="2007-05" db="EMBL/GenBank/DDBJ databases">
        <title>Complete sequence of chromosome of Staphylococcus aureus subsp. aureus JH9.</title>
        <authorList>
            <consortium name="US DOE Joint Genome Institute"/>
            <person name="Copeland A."/>
            <person name="Lucas S."/>
            <person name="Lapidus A."/>
            <person name="Barry K."/>
            <person name="Detter J.C."/>
            <person name="Glavina del Rio T."/>
            <person name="Hammon N."/>
            <person name="Israni S."/>
            <person name="Pitluck S."/>
            <person name="Chain P."/>
            <person name="Malfatti S."/>
            <person name="Shin M."/>
            <person name="Vergez L."/>
            <person name="Schmutz J."/>
            <person name="Larimer F."/>
            <person name="Land M."/>
            <person name="Hauser L."/>
            <person name="Kyrpides N."/>
            <person name="Kim E."/>
            <person name="Tomasz A."/>
            <person name="Richardson P."/>
        </authorList>
    </citation>
    <scope>NUCLEOTIDE SEQUENCE [LARGE SCALE GENOMIC DNA]</scope>
    <source>
        <strain>JH9</strain>
    </source>
</reference>
<gene>
    <name evidence="1" type="primary">lacG</name>
    <name type="ordered locus">SaurJH9_2220</name>
</gene>
<comment type="catalytic activity">
    <reaction evidence="1">
        <text>a 6-phospho-beta-D-galactoside + H2O = D-galactose 6-phosphate + an alcohol</text>
        <dbReference type="Rhea" id="RHEA:24568"/>
        <dbReference type="ChEBI" id="CHEBI:15377"/>
        <dbReference type="ChEBI" id="CHEBI:30879"/>
        <dbReference type="ChEBI" id="CHEBI:58534"/>
        <dbReference type="ChEBI" id="CHEBI:91004"/>
        <dbReference type="EC" id="3.2.1.85"/>
    </reaction>
</comment>
<comment type="pathway">
    <text evidence="1">Carbohydrate metabolism; lactose degradation; D-galactose 6-phosphate and beta-D-glucose from lactose 6-phosphate: step 1/1.</text>
</comment>
<comment type="similarity">
    <text evidence="1">Belongs to the glycosyl hydrolase 1 family.</text>
</comment>
<proteinExistence type="inferred from homology"/>
<feature type="chain" id="PRO_1000087880" description="6-phospho-beta-galactosidase">
    <location>
        <begin position="1"/>
        <end position="470"/>
    </location>
</feature>
<feature type="active site" description="Proton donor" evidence="1">
    <location>
        <position position="160"/>
    </location>
</feature>
<feature type="active site" description="Nucleophile" evidence="1">
    <location>
        <position position="375"/>
    </location>
</feature>
<feature type="binding site" evidence="1">
    <location>
        <position position="19"/>
    </location>
    <ligand>
        <name>D-galactose 6-phosphate</name>
        <dbReference type="ChEBI" id="CHEBI:91004"/>
    </ligand>
</feature>
<feature type="binding site" evidence="1">
    <location>
        <position position="116"/>
    </location>
    <ligand>
        <name>D-galactose 6-phosphate</name>
        <dbReference type="ChEBI" id="CHEBI:91004"/>
    </ligand>
</feature>
<feature type="binding site" evidence="1">
    <location>
        <position position="159"/>
    </location>
    <ligand>
        <name>D-galactose 6-phosphate</name>
        <dbReference type="ChEBI" id="CHEBI:91004"/>
    </ligand>
</feature>
<feature type="binding site" evidence="1">
    <location>
        <position position="160"/>
    </location>
    <ligand>
        <name>D-galactose 6-phosphate</name>
        <dbReference type="ChEBI" id="CHEBI:91004"/>
    </ligand>
</feature>
<feature type="binding site" evidence="1">
    <location>
        <position position="297"/>
    </location>
    <ligand>
        <name>D-galactose 6-phosphate</name>
        <dbReference type="ChEBI" id="CHEBI:91004"/>
    </ligand>
</feature>
<feature type="binding site" evidence="1">
    <location>
        <position position="430"/>
    </location>
    <ligand>
        <name>D-galactose 6-phosphate</name>
        <dbReference type="ChEBI" id="CHEBI:91004"/>
    </ligand>
</feature>
<feature type="binding site" evidence="1">
    <location>
        <position position="431"/>
    </location>
    <ligand>
        <name>D-galactose 6-phosphate</name>
        <dbReference type="ChEBI" id="CHEBI:91004"/>
    </ligand>
</feature>
<feature type="binding site" evidence="1">
    <location>
        <position position="437"/>
    </location>
    <ligand>
        <name>D-galactose 6-phosphate</name>
        <dbReference type="ChEBI" id="CHEBI:91004"/>
    </ligand>
</feature>
<feature type="binding site" evidence="1">
    <location>
        <position position="439"/>
    </location>
    <ligand>
        <name>D-galactose 6-phosphate</name>
        <dbReference type="ChEBI" id="CHEBI:91004"/>
    </ligand>
</feature>
<dbReference type="EC" id="3.2.1.85" evidence="1"/>
<dbReference type="EMBL" id="CP000703">
    <property type="protein sequence ID" value="ABQ50001.1"/>
    <property type="molecule type" value="Genomic_DNA"/>
</dbReference>
<dbReference type="RefSeq" id="WP_000169224.1">
    <property type="nucleotide sequence ID" value="NC_009487.1"/>
</dbReference>
<dbReference type="SMR" id="A5IUX8"/>
<dbReference type="CAZy" id="GH1">
    <property type="family name" value="Glycoside Hydrolase Family 1"/>
</dbReference>
<dbReference type="KEGG" id="saj:SaurJH9_2220"/>
<dbReference type="HOGENOM" id="CLU_001859_1_3_9"/>
<dbReference type="UniPathway" id="UPA00542">
    <property type="reaction ID" value="UER00605"/>
</dbReference>
<dbReference type="GO" id="GO:0005829">
    <property type="term" value="C:cytosol"/>
    <property type="evidence" value="ECO:0007669"/>
    <property type="project" value="TreeGrafter"/>
</dbReference>
<dbReference type="GO" id="GO:0033920">
    <property type="term" value="F:6-phospho-beta-galactosidase activity"/>
    <property type="evidence" value="ECO:0007669"/>
    <property type="project" value="UniProtKB-UniRule"/>
</dbReference>
<dbReference type="GO" id="GO:0008422">
    <property type="term" value="F:beta-glucosidase activity"/>
    <property type="evidence" value="ECO:0007669"/>
    <property type="project" value="TreeGrafter"/>
</dbReference>
<dbReference type="GO" id="GO:0019512">
    <property type="term" value="P:lactose catabolic process via tagatose-6-phosphate"/>
    <property type="evidence" value="ECO:0007669"/>
    <property type="project" value="InterPro"/>
</dbReference>
<dbReference type="FunFam" id="3.20.20.80:FF:000004">
    <property type="entry name" value="Beta-glucosidase 6-phospho-beta-glucosidase"/>
    <property type="match status" value="1"/>
</dbReference>
<dbReference type="Gene3D" id="3.20.20.80">
    <property type="entry name" value="Glycosidases"/>
    <property type="match status" value="1"/>
</dbReference>
<dbReference type="HAMAP" id="MF_01574">
    <property type="entry name" value="LacG"/>
    <property type="match status" value="1"/>
</dbReference>
<dbReference type="InterPro" id="IPR005928">
    <property type="entry name" value="6P-beta-galactosidase"/>
</dbReference>
<dbReference type="InterPro" id="IPR001360">
    <property type="entry name" value="Glyco_hydro_1"/>
</dbReference>
<dbReference type="InterPro" id="IPR018120">
    <property type="entry name" value="Glyco_hydro_1_AS"/>
</dbReference>
<dbReference type="InterPro" id="IPR033132">
    <property type="entry name" value="Glyco_hydro_1_N_CS"/>
</dbReference>
<dbReference type="InterPro" id="IPR017853">
    <property type="entry name" value="Glycoside_hydrolase_SF"/>
</dbReference>
<dbReference type="NCBIfam" id="TIGR01233">
    <property type="entry name" value="lacG"/>
    <property type="match status" value="1"/>
</dbReference>
<dbReference type="NCBIfam" id="NF010036">
    <property type="entry name" value="PRK13511.1"/>
    <property type="match status" value="1"/>
</dbReference>
<dbReference type="PANTHER" id="PTHR10353">
    <property type="entry name" value="GLYCOSYL HYDROLASE"/>
    <property type="match status" value="1"/>
</dbReference>
<dbReference type="PANTHER" id="PTHR10353:SF36">
    <property type="entry name" value="LP05116P"/>
    <property type="match status" value="1"/>
</dbReference>
<dbReference type="Pfam" id="PF00232">
    <property type="entry name" value="Glyco_hydro_1"/>
    <property type="match status" value="1"/>
</dbReference>
<dbReference type="PRINTS" id="PR00131">
    <property type="entry name" value="GLHYDRLASE1"/>
</dbReference>
<dbReference type="SUPFAM" id="SSF51445">
    <property type="entry name" value="(Trans)glycosidases"/>
    <property type="match status" value="1"/>
</dbReference>
<dbReference type="PROSITE" id="PS00572">
    <property type="entry name" value="GLYCOSYL_HYDROL_F1_1"/>
    <property type="match status" value="1"/>
</dbReference>
<dbReference type="PROSITE" id="PS00653">
    <property type="entry name" value="GLYCOSYL_HYDROL_F1_2"/>
    <property type="match status" value="1"/>
</dbReference>
<sequence length="470" mass="54565">MTKTLPEDFIFGGATAAYQAEGATNTDGKGRVAWDTYLEENYWYTAEPASDFYNRYPVDLELSEKFGVNGIRISIAWSRIFPNGYGEVNPKGVEYYHKLFAECHKRHVEPFVTLHHFDTPEVLHKDGDFLNRKTIDYFVDYAEYCFKEFPEVKYWTTFNEIGPIGDGQYLVGKFPPGIKYDFEKVFQSHHNMMVAHARAVKLFKDGGYQGEIGVVHALPTKYPFDPSNPEDVRAAELEDIIHNKFILDATYLGKYSRETMEGVQHILSVNGGKLNITDEDYAILDAAKDLNDFLGINYYMSDWMRGYDGESEITHNATGDKGGSKYQLKGVGQREFDVDVPRTDWDWMIYPQGLYDQIMRVVKDYPNYHKIYITENGLGYKDEFIESEKTVHDDARIDYVRQHLNVIADAIKDGANVKGYFIWSLMDVFSWSNGYEKRYGLFYVDFETQERYPKKSAYWYKELAETKEIK</sequence>
<accession>A5IUX8</accession>
<organism>
    <name type="scientific">Staphylococcus aureus (strain JH9)</name>
    <dbReference type="NCBI Taxonomy" id="359786"/>
    <lineage>
        <taxon>Bacteria</taxon>
        <taxon>Bacillati</taxon>
        <taxon>Bacillota</taxon>
        <taxon>Bacilli</taxon>
        <taxon>Bacillales</taxon>
        <taxon>Staphylococcaceae</taxon>
        <taxon>Staphylococcus</taxon>
    </lineage>
</organism>
<name>LACG_STAA9</name>